<dbReference type="EMBL" id="AH002411">
    <property type="protein sequence ID" value="AAA47725.1"/>
    <property type="molecule type" value="Genomic_RNA"/>
</dbReference>
<dbReference type="PIR" id="A48344">
    <property type="entry name" value="A48344"/>
</dbReference>
<dbReference type="GO" id="GO:0044196">
    <property type="term" value="C:host cell nucleolus"/>
    <property type="evidence" value="ECO:0007669"/>
    <property type="project" value="UniProtKB-SubCell"/>
</dbReference>
<dbReference type="GO" id="GO:0003723">
    <property type="term" value="F:RNA binding"/>
    <property type="evidence" value="ECO:0007669"/>
    <property type="project" value="UniProtKB-KW"/>
</dbReference>
<dbReference type="GO" id="GO:0001070">
    <property type="term" value="F:RNA-binding transcription regulator activity"/>
    <property type="evidence" value="ECO:0007669"/>
    <property type="project" value="InterPro"/>
</dbReference>
<dbReference type="GO" id="GO:0050434">
    <property type="term" value="P:positive regulation of viral transcription"/>
    <property type="evidence" value="ECO:0007669"/>
    <property type="project" value="InterPro"/>
</dbReference>
<dbReference type="Gene3D" id="4.10.20.10">
    <property type="entry name" value="Tat domain"/>
    <property type="match status" value="1"/>
</dbReference>
<dbReference type="InterPro" id="IPR001831">
    <property type="entry name" value="IV_Tat"/>
</dbReference>
<dbReference type="InterPro" id="IPR036963">
    <property type="entry name" value="Tat_dom_sf"/>
</dbReference>
<dbReference type="Pfam" id="PF00539">
    <property type="entry name" value="Tat"/>
    <property type="match status" value="1"/>
</dbReference>
<reference key="1">
    <citation type="journal article" date="1992" name="Arch. Virol.">
        <title>Genetic characterization of simian immunodeficiency virus isolated from an African mandrill.</title>
        <authorList>
            <person name="Sakai H."/>
            <person name="Sakuragi J."/>
            <person name="Sakuragi S."/>
            <person name="Shibata R."/>
            <person name="Hayami M."/>
            <person name="Ishimoto A."/>
            <person name="Adachi A."/>
        </authorList>
    </citation>
    <scope>NUCLEOTIDE SEQUENCE [GENOMIC RNA]</scope>
</reference>
<reference key="2">
    <citation type="journal article" date="1999" name="J. Virol.">
        <title>Analysis of the effect of natural sequence variation in Tat and in cyclin T on the formation and RNA binding properties of Tat-cyclin T complexes.</title>
        <authorList>
            <person name="Bieniasz P.D."/>
            <person name="Grdina T.A."/>
            <person name="Bogerd H.P."/>
            <person name="Cullen B.R."/>
        </authorList>
    </citation>
    <scope>INTERACTION WITH HUMAN CCNT1 AND CCNT2</scope>
</reference>
<proteinExistence type="evidence at protein level"/>
<gene>
    <name type="primary">tat</name>
</gene>
<name>TAT_SIVAM</name>
<organism>
    <name type="scientific">Simian immunodeficiency virus (isolate African mandrill)</name>
    <name type="common">SIV-mnd</name>
    <dbReference type="NCBI Taxonomy" id="36378"/>
    <lineage>
        <taxon>Viruses</taxon>
        <taxon>Riboviria</taxon>
        <taxon>Pararnavirae</taxon>
        <taxon>Artverviricota</taxon>
        <taxon>Revtraviricetes</taxon>
        <taxon>Ortervirales</taxon>
        <taxon>Retroviridae</taxon>
        <taxon>Orthoretrovirinae</taxon>
        <taxon>Lentivirus</taxon>
        <taxon>Simian immunodeficiency virus</taxon>
    </lineage>
</organism>
<evidence type="ECO:0000250" key="1"/>
<evidence type="ECO:0000250" key="2">
    <source>
        <dbReference type="UniProtKB" id="P04608"/>
    </source>
</evidence>
<evidence type="ECO:0000255" key="3"/>
<evidence type="ECO:0000305" key="4"/>
<accession>P36340</accession>
<organismHost>
    <name type="scientific">Cercopithecidae</name>
    <name type="common">Old World monkeys</name>
    <dbReference type="NCBI Taxonomy" id="9527"/>
</organismHost>
<comment type="function">
    <text evidence="2">Transcriptional activator that increases RNA Pol II processivity, thereby increasing the level of full-length viral transcripts. Recognizes a hairpin structure at the 5'-LTR of the nascent viral mRNAs referred to as the transactivation responsive RNA element (TAR) and recruits the cyclin T1-CDK9 complex (P-TEFb complex) that will in turn hyperphosphorylate the RNA polymerase II to allow efficient elongation. The CDK9 component of P-TEFb and other Tat-activated kinases hyperphosphorylate the C-terminus of RNA Pol II that becomes stabilized and much more processive.</text>
</comment>
<comment type="function">
    <text evidence="1">Extracellular circulating Tat can be endocytosed by surrounding uninfected cells via the binding to several surface receptors. Endosomal low pH allows Tat to cross the endosome membrane to enter the cytosol and eventually further translocate into the nucleus, thereby inducing severe cell dysfunctions ranging from cell activation to cell death. Through (By similarity).</text>
</comment>
<comment type="subunit">
    <text evidence="1">Interacts with host CCNT1. Associates with the P-TEFb complex composed at least of Tat, P-TEFb (CDK9 and CCNT1), TAR RNA, RNA Pol II. Interacts with CCNT2; the resulting complex is unable to bind to TAR RNA (By similarity).</text>
</comment>
<comment type="subcellular location">
    <subcellularLocation>
        <location evidence="1">Host nucleus</location>
        <location evidence="1">Host nucleolus</location>
    </subcellularLocation>
</comment>
<comment type="similarity">
    <text evidence="4">Belongs to the lentiviruses Tat family.</text>
</comment>
<keyword id="KW-0010">Activator</keyword>
<keyword id="KW-1048">Host nucleus</keyword>
<keyword id="KW-0945">Host-virus interaction</keyword>
<keyword id="KW-0694">RNA-binding</keyword>
<keyword id="KW-0804">Transcription</keyword>
<keyword id="KW-0805">Transcription regulation</keyword>
<feature type="chain" id="PRO_0000085379" description="Protein Tat">
    <location>
        <begin position="1"/>
        <end position="116"/>
    </location>
</feature>
<feature type="region of interest" description="Cysteine-rich" evidence="1">
    <location>
        <begin position="37"/>
        <end position="53"/>
    </location>
</feature>
<feature type="region of interest" description="Core" evidence="1">
    <location>
        <begin position="54"/>
        <end position="64"/>
    </location>
</feature>
<feature type="short sequence motif" description="Nuclear localization signal, and RNA-binding (TAR)" evidence="3">
    <location>
        <begin position="65"/>
        <end position="73"/>
    </location>
</feature>
<sequence>MEPSGKEDHNCLPQDLGQEEIDYKQLLEEYYQPLQACENKCWCKKCCFHCMLCFHKKGLGIRYHVYRKRGPGTNKKIPGGGEEAIRRAIDLCFFNRTCSRTHTANGQTTEKKKATA</sequence>
<protein>
    <recommendedName>
        <fullName>Protein Tat</fullName>
    </recommendedName>
    <alternativeName>
        <fullName>Transactivating regulatory protein</fullName>
    </alternativeName>
</protein>